<comment type="function">
    <text evidence="1">Binds directly to 16S ribosomal RNA.</text>
</comment>
<comment type="similarity">
    <text evidence="1">Belongs to the bacterial ribosomal protein bS20 family.</text>
</comment>
<proteinExistence type="inferred from homology"/>
<organism>
    <name type="scientific">Clostridium botulinum (strain Kyoto / Type A2)</name>
    <dbReference type="NCBI Taxonomy" id="536232"/>
    <lineage>
        <taxon>Bacteria</taxon>
        <taxon>Bacillati</taxon>
        <taxon>Bacillota</taxon>
        <taxon>Clostridia</taxon>
        <taxon>Eubacteriales</taxon>
        <taxon>Clostridiaceae</taxon>
        <taxon>Clostridium</taxon>
    </lineage>
</organism>
<reference key="1">
    <citation type="submission" date="2008-10" db="EMBL/GenBank/DDBJ databases">
        <title>Genome sequence of Clostridium botulinum A2 Kyoto.</title>
        <authorList>
            <person name="Shrivastava S."/>
            <person name="Brinkac L.M."/>
            <person name="Brown J.L."/>
            <person name="Bruce D."/>
            <person name="Detter C.C."/>
            <person name="Johnson E.A."/>
            <person name="Munk C.A."/>
            <person name="Smith L.A."/>
            <person name="Smith T.J."/>
            <person name="Sutton G."/>
            <person name="Brettin T.S."/>
        </authorList>
    </citation>
    <scope>NUCLEOTIDE SEQUENCE [LARGE SCALE GENOMIC DNA]</scope>
    <source>
        <strain>Kyoto / Type A2</strain>
    </source>
</reference>
<keyword id="KW-0687">Ribonucleoprotein</keyword>
<keyword id="KW-0689">Ribosomal protein</keyword>
<keyword id="KW-0694">RNA-binding</keyword>
<keyword id="KW-0699">rRNA-binding</keyword>
<accession>C1FVU8</accession>
<protein>
    <recommendedName>
        <fullName evidence="1">Small ribosomal subunit protein bS20</fullName>
    </recommendedName>
    <alternativeName>
        <fullName evidence="2">30S ribosomal protein S20</fullName>
    </alternativeName>
</protein>
<name>RS20_CLOBJ</name>
<gene>
    <name evidence="1" type="primary">rpsT</name>
    <name type="ordered locus">CLM_3362</name>
</gene>
<feature type="chain" id="PRO_1000194234" description="Small ribosomal subunit protein bS20">
    <location>
        <begin position="1"/>
        <end position="88"/>
    </location>
</feature>
<sequence length="88" mass="9655">MANIKSAKKRIKVIETKTLRNKMLKSSLKTTIKNFLTVVEGKNVEEAKAAYKTAARALDMSVSKGIVHKNKAARTKSRLAAKLNALNA</sequence>
<dbReference type="EMBL" id="CP001581">
    <property type="protein sequence ID" value="ACO84154.1"/>
    <property type="molecule type" value="Genomic_DNA"/>
</dbReference>
<dbReference type="RefSeq" id="WP_003358111.1">
    <property type="nucleotide sequence ID" value="NC_012563.1"/>
</dbReference>
<dbReference type="SMR" id="C1FVU8"/>
<dbReference type="GeneID" id="5187653"/>
<dbReference type="KEGG" id="cby:CLM_3362"/>
<dbReference type="eggNOG" id="COG0268">
    <property type="taxonomic scope" value="Bacteria"/>
</dbReference>
<dbReference type="HOGENOM" id="CLU_160655_0_0_9"/>
<dbReference type="Proteomes" id="UP000001374">
    <property type="component" value="Chromosome"/>
</dbReference>
<dbReference type="GO" id="GO:0005829">
    <property type="term" value="C:cytosol"/>
    <property type="evidence" value="ECO:0007669"/>
    <property type="project" value="TreeGrafter"/>
</dbReference>
<dbReference type="GO" id="GO:0015935">
    <property type="term" value="C:small ribosomal subunit"/>
    <property type="evidence" value="ECO:0007669"/>
    <property type="project" value="TreeGrafter"/>
</dbReference>
<dbReference type="GO" id="GO:0070181">
    <property type="term" value="F:small ribosomal subunit rRNA binding"/>
    <property type="evidence" value="ECO:0007669"/>
    <property type="project" value="TreeGrafter"/>
</dbReference>
<dbReference type="GO" id="GO:0003735">
    <property type="term" value="F:structural constituent of ribosome"/>
    <property type="evidence" value="ECO:0007669"/>
    <property type="project" value="InterPro"/>
</dbReference>
<dbReference type="GO" id="GO:0006412">
    <property type="term" value="P:translation"/>
    <property type="evidence" value="ECO:0007669"/>
    <property type="project" value="UniProtKB-UniRule"/>
</dbReference>
<dbReference type="FunFam" id="1.20.58.110:FF:000001">
    <property type="entry name" value="30S ribosomal protein S20"/>
    <property type="match status" value="1"/>
</dbReference>
<dbReference type="Gene3D" id="1.20.58.110">
    <property type="entry name" value="Ribosomal protein S20"/>
    <property type="match status" value="1"/>
</dbReference>
<dbReference type="HAMAP" id="MF_00500">
    <property type="entry name" value="Ribosomal_bS20"/>
    <property type="match status" value="1"/>
</dbReference>
<dbReference type="InterPro" id="IPR002583">
    <property type="entry name" value="Ribosomal_bS20"/>
</dbReference>
<dbReference type="InterPro" id="IPR036510">
    <property type="entry name" value="Ribosomal_bS20_sf"/>
</dbReference>
<dbReference type="NCBIfam" id="TIGR00029">
    <property type="entry name" value="S20"/>
    <property type="match status" value="1"/>
</dbReference>
<dbReference type="PANTHER" id="PTHR33398">
    <property type="entry name" value="30S RIBOSOMAL PROTEIN S20"/>
    <property type="match status" value="1"/>
</dbReference>
<dbReference type="PANTHER" id="PTHR33398:SF1">
    <property type="entry name" value="SMALL RIBOSOMAL SUBUNIT PROTEIN BS20C"/>
    <property type="match status" value="1"/>
</dbReference>
<dbReference type="Pfam" id="PF01649">
    <property type="entry name" value="Ribosomal_S20p"/>
    <property type="match status" value="1"/>
</dbReference>
<dbReference type="SUPFAM" id="SSF46992">
    <property type="entry name" value="Ribosomal protein S20"/>
    <property type="match status" value="1"/>
</dbReference>
<evidence type="ECO:0000255" key="1">
    <source>
        <dbReference type="HAMAP-Rule" id="MF_00500"/>
    </source>
</evidence>
<evidence type="ECO:0000305" key="2"/>